<accession>Q8PUD6</accession>
<keyword id="KW-0560">Oxidoreductase</keyword>
<protein>
    <recommendedName>
        <fullName evidence="1">Peptide methionine sulfoxide reductase MsrA</fullName>
        <shortName evidence="1">Protein-methionine-S-oxide reductase</shortName>
        <ecNumber evidence="1">1.8.4.11</ecNumber>
    </recommendedName>
    <alternativeName>
        <fullName evidence="1">Peptide-methionine (S)-S-oxide reductase</fullName>
        <shortName evidence="1">Peptide Met(O) reductase</shortName>
    </alternativeName>
</protein>
<proteinExistence type="inferred from homology"/>
<feature type="chain" id="PRO_0000138619" description="Peptide methionine sulfoxide reductase MsrA">
    <location>
        <begin position="1"/>
        <end position="211"/>
    </location>
</feature>
<feature type="active site" evidence="1">
    <location>
        <position position="60"/>
    </location>
</feature>
<gene>
    <name evidence="1" type="primary">msrA</name>
    <name type="ordered locus">MM_2399</name>
</gene>
<reference key="1">
    <citation type="journal article" date="2002" name="J. Mol. Microbiol. Biotechnol.">
        <title>The genome of Methanosarcina mazei: evidence for lateral gene transfer between Bacteria and Archaea.</title>
        <authorList>
            <person name="Deppenmeier U."/>
            <person name="Johann A."/>
            <person name="Hartsch T."/>
            <person name="Merkl R."/>
            <person name="Schmitz R.A."/>
            <person name="Martinez-Arias R."/>
            <person name="Henne A."/>
            <person name="Wiezer A."/>
            <person name="Baeumer S."/>
            <person name="Jacobi C."/>
            <person name="Brueggemann H."/>
            <person name="Lienard T."/>
            <person name="Christmann A."/>
            <person name="Boemecke M."/>
            <person name="Steckel S."/>
            <person name="Bhattacharyya A."/>
            <person name="Lykidis A."/>
            <person name="Overbeek R."/>
            <person name="Klenk H.-P."/>
            <person name="Gunsalus R.P."/>
            <person name="Fritz H.-J."/>
            <person name="Gottschalk G."/>
        </authorList>
    </citation>
    <scope>NUCLEOTIDE SEQUENCE [LARGE SCALE GENOMIC DNA]</scope>
    <source>
        <strain>ATCC BAA-159 / DSM 3647 / Goe1 / Go1 / JCM 11833 / OCM 88</strain>
    </source>
</reference>
<evidence type="ECO:0000255" key="1">
    <source>
        <dbReference type="HAMAP-Rule" id="MF_01401"/>
    </source>
</evidence>
<organism>
    <name type="scientific">Methanosarcina mazei (strain ATCC BAA-159 / DSM 3647 / Goe1 / Go1 / JCM 11833 / OCM 88)</name>
    <name type="common">Methanosarcina frisia</name>
    <dbReference type="NCBI Taxonomy" id="192952"/>
    <lineage>
        <taxon>Archaea</taxon>
        <taxon>Methanobacteriati</taxon>
        <taxon>Methanobacteriota</taxon>
        <taxon>Stenosarchaea group</taxon>
        <taxon>Methanomicrobia</taxon>
        <taxon>Methanosarcinales</taxon>
        <taxon>Methanosarcinaceae</taxon>
        <taxon>Methanosarcina</taxon>
    </lineage>
</organism>
<name>MSRA_METMA</name>
<dbReference type="EC" id="1.8.4.11" evidence="1"/>
<dbReference type="EMBL" id="AE008384">
    <property type="protein sequence ID" value="AAM32095.1"/>
    <property type="molecule type" value="Genomic_DNA"/>
</dbReference>
<dbReference type="SMR" id="Q8PUD6"/>
<dbReference type="KEGG" id="mma:MM_2399"/>
<dbReference type="PATRIC" id="fig|192952.21.peg.2746"/>
<dbReference type="eggNOG" id="arCOG02816">
    <property type="taxonomic scope" value="Archaea"/>
</dbReference>
<dbReference type="HOGENOM" id="CLU_031040_10_0_2"/>
<dbReference type="Proteomes" id="UP000000595">
    <property type="component" value="Chromosome"/>
</dbReference>
<dbReference type="GO" id="GO:0033744">
    <property type="term" value="F:L-methionine:thioredoxin-disulfide S-oxidoreductase activity"/>
    <property type="evidence" value="ECO:0007669"/>
    <property type="project" value="RHEA"/>
</dbReference>
<dbReference type="GO" id="GO:0008113">
    <property type="term" value="F:peptide-methionine (S)-S-oxide reductase activity"/>
    <property type="evidence" value="ECO:0007669"/>
    <property type="project" value="UniProtKB-UniRule"/>
</dbReference>
<dbReference type="GO" id="GO:0036211">
    <property type="term" value="P:protein modification process"/>
    <property type="evidence" value="ECO:0007669"/>
    <property type="project" value="UniProtKB-UniRule"/>
</dbReference>
<dbReference type="FunFam" id="3.30.1060.10:FF:000008">
    <property type="entry name" value="Peptide methionine sulfoxide reductase MsrA"/>
    <property type="match status" value="1"/>
</dbReference>
<dbReference type="Gene3D" id="3.30.1060.10">
    <property type="entry name" value="Peptide methionine sulphoxide reductase MsrA"/>
    <property type="match status" value="1"/>
</dbReference>
<dbReference type="HAMAP" id="MF_01401">
    <property type="entry name" value="MsrA"/>
    <property type="match status" value="1"/>
</dbReference>
<dbReference type="InterPro" id="IPR002569">
    <property type="entry name" value="Met_Sox_Rdtase_MsrA_dom"/>
</dbReference>
<dbReference type="InterPro" id="IPR036509">
    <property type="entry name" value="Met_Sox_Rdtase_MsrA_sf"/>
</dbReference>
<dbReference type="NCBIfam" id="TIGR00401">
    <property type="entry name" value="msrA"/>
    <property type="match status" value="1"/>
</dbReference>
<dbReference type="PANTHER" id="PTHR43774">
    <property type="entry name" value="PEPTIDE METHIONINE SULFOXIDE REDUCTASE"/>
    <property type="match status" value="1"/>
</dbReference>
<dbReference type="PANTHER" id="PTHR43774:SF1">
    <property type="entry name" value="PEPTIDE METHIONINE SULFOXIDE REDUCTASE MSRA 2"/>
    <property type="match status" value="1"/>
</dbReference>
<dbReference type="Pfam" id="PF01625">
    <property type="entry name" value="PMSR"/>
    <property type="match status" value="1"/>
</dbReference>
<dbReference type="SUPFAM" id="SSF55068">
    <property type="entry name" value="Peptide methionine sulfoxide reductase"/>
    <property type="match status" value="1"/>
</dbReference>
<sequence length="211" mass="24048">MIYLKYNCPLTYLILLKLEGGKTVEEKTDAEQRNATSEEDTEIFENPGEGLEKATFAAGCFWGIEEAFRQIKGVVATAVGYSGGHFKRPTYEQVCTLDTGHAEAVRVIFDPEIVSYKTLLDVFWKIHDPTTKDRQGPDVGKQYRSVIFYHSDEQKAAALASKEELEKSGAFKNPVVTEIVPVSEFYMAEDYHQQYFEKKGFLQNIFRSFKK</sequence>
<comment type="function">
    <text evidence="1">Has an important function as a repair enzyme for proteins that have been inactivated by oxidation. Catalyzes the reversible oxidation-reduction of methionine sulfoxide in proteins to methionine.</text>
</comment>
<comment type="catalytic activity">
    <reaction evidence="1">
        <text>L-methionyl-[protein] + [thioredoxin]-disulfide + H2O = L-methionyl-(S)-S-oxide-[protein] + [thioredoxin]-dithiol</text>
        <dbReference type="Rhea" id="RHEA:14217"/>
        <dbReference type="Rhea" id="RHEA-COMP:10698"/>
        <dbReference type="Rhea" id="RHEA-COMP:10700"/>
        <dbReference type="Rhea" id="RHEA-COMP:12313"/>
        <dbReference type="Rhea" id="RHEA-COMP:12315"/>
        <dbReference type="ChEBI" id="CHEBI:15377"/>
        <dbReference type="ChEBI" id="CHEBI:16044"/>
        <dbReference type="ChEBI" id="CHEBI:29950"/>
        <dbReference type="ChEBI" id="CHEBI:44120"/>
        <dbReference type="ChEBI" id="CHEBI:50058"/>
        <dbReference type="EC" id="1.8.4.11"/>
    </reaction>
</comment>
<comment type="catalytic activity">
    <reaction evidence="1">
        <text>[thioredoxin]-disulfide + L-methionine + H2O = L-methionine (S)-S-oxide + [thioredoxin]-dithiol</text>
        <dbReference type="Rhea" id="RHEA:19993"/>
        <dbReference type="Rhea" id="RHEA-COMP:10698"/>
        <dbReference type="Rhea" id="RHEA-COMP:10700"/>
        <dbReference type="ChEBI" id="CHEBI:15377"/>
        <dbReference type="ChEBI" id="CHEBI:29950"/>
        <dbReference type="ChEBI" id="CHEBI:50058"/>
        <dbReference type="ChEBI" id="CHEBI:57844"/>
        <dbReference type="ChEBI" id="CHEBI:58772"/>
        <dbReference type="EC" id="1.8.4.11"/>
    </reaction>
</comment>
<comment type="similarity">
    <text evidence="1">Belongs to the MsrA Met sulfoxide reductase family.</text>
</comment>